<dbReference type="EMBL" id="X55499">
    <property type="protein sequence ID" value="CAA39116.1"/>
    <property type="status" value="ALT_INIT"/>
    <property type="molecule type" value="mRNA"/>
</dbReference>
<dbReference type="EMBL" id="BC011319">
    <property type="protein sequence ID" value="AAH11319.1"/>
    <property type="molecule type" value="mRNA"/>
</dbReference>
<dbReference type="CCDS" id="CCDS21144.1"/>
<dbReference type="PIR" id="A36673">
    <property type="entry name" value="A36673"/>
</dbReference>
<dbReference type="RefSeq" id="NP_034014.1">
    <property type="nucleotide sequence ID" value="NM_009884.3"/>
</dbReference>
<dbReference type="SMR" id="P53568"/>
<dbReference type="BioGRID" id="198671">
    <property type="interactions" value="6"/>
</dbReference>
<dbReference type="FunCoup" id="P53568">
    <property type="interactions" value="2430"/>
</dbReference>
<dbReference type="IntAct" id="P53568">
    <property type="interactions" value="2"/>
</dbReference>
<dbReference type="STRING" id="10090.ENSMUSP00000118588"/>
<dbReference type="iPTMnet" id="P53568"/>
<dbReference type="PhosphoSitePlus" id="P53568"/>
<dbReference type="PaxDb" id="10090-ENSMUSP00000118588"/>
<dbReference type="PeptideAtlas" id="P53568"/>
<dbReference type="ProteomicsDB" id="279996"/>
<dbReference type="Pumba" id="P53568"/>
<dbReference type="Antibodypedia" id="1652">
    <property type="antibodies" value="374 antibodies from 34 providers"/>
</dbReference>
<dbReference type="DNASU" id="12611"/>
<dbReference type="Ensembl" id="ENSMUST00000070191.10">
    <property type="protein sequence ID" value="ENSMUSP00000064963.9"/>
    <property type="gene ID" value="ENSMUSG00000056216.10"/>
</dbReference>
<dbReference type="Ensembl" id="ENSMUST00000130491.3">
    <property type="protein sequence ID" value="ENSMUSP00000118588.2"/>
    <property type="gene ID" value="ENSMUSG00000056216.10"/>
</dbReference>
<dbReference type="GeneID" id="12611"/>
<dbReference type="KEGG" id="mmu:12611"/>
<dbReference type="UCSC" id="uc009gjk.1">
    <property type="organism name" value="mouse"/>
</dbReference>
<dbReference type="AGR" id="MGI:104982"/>
<dbReference type="CTD" id="1054"/>
<dbReference type="MGI" id="MGI:104982">
    <property type="gene designation" value="Cebpg"/>
</dbReference>
<dbReference type="VEuPathDB" id="HostDB:ENSMUSG00000056216"/>
<dbReference type="eggNOG" id="KOG3119">
    <property type="taxonomic scope" value="Eukaryota"/>
</dbReference>
<dbReference type="GeneTree" id="ENSGT00940000160676"/>
<dbReference type="HOGENOM" id="CLU_146813_0_0_1"/>
<dbReference type="InParanoid" id="P53568"/>
<dbReference type="OMA" id="HAHNFAD"/>
<dbReference type="OrthoDB" id="10039716at2759"/>
<dbReference type="PhylomeDB" id="P53568"/>
<dbReference type="TreeFam" id="TF105009"/>
<dbReference type="BioGRID-ORCS" id="12611">
    <property type="hits" value="5 hits in 116 CRISPR screens"/>
</dbReference>
<dbReference type="ChiTaRS" id="Cebpg">
    <property type="organism name" value="mouse"/>
</dbReference>
<dbReference type="PRO" id="PR:P53568"/>
<dbReference type="Proteomes" id="UP000000589">
    <property type="component" value="Chromosome 7"/>
</dbReference>
<dbReference type="RNAct" id="P53568">
    <property type="molecule type" value="protein"/>
</dbReference>
<dbReference type="Bgee" id="ENSMUSG00000056216">
    <property type="expression patterns" value="Expressed in olfactory epithelium and 254 other cell types or tissues"/>
</dbReference>
<dbReference type="ExpressionAtlas" id="P53568">
    <property type="expression patterns" value="baseline and differential"/>
</dbReference>
<dbReference type="GO" id="GO:0005654">
    <property type="term" value="C:nucleoplasm"/>
    <property type="evidence" value="ECO:0000304"/>
    <property type="project" value="Reactome"/>
</dbReference>
<dbReference type="GO" id="GO:0005634">
    <property type="term" value="C:nucleus"/>
    <property type="evidence" value="ECO:0000314"/>
    <property type="project" value="UniProtKB"/>
</dbReference>
<dbReference type="GO" id="GO:0090575">
    <property type="term" value="C:RNA polymerase II transcription regulator complex"/>
    <property type="evidence" value="ECO:0007669"/>
    <property type="project" value="Ensembl"/>
</dbReference>
<dbReference type="GO" id="GO:0003677">
    <property type="term" value="F:DNA binding"/>
    <property type="evidence" value="ECO:0000314"/>
    <property type="project" value="UniProtKB"/>
</dbReference>
<dbReference type="GO" id="GO:0140297">
    <property type="term" value="F:DNA-binding transcription factor binding"/>
    <property type="evidence" value="ECO:0000250"/>
    <property type="project" value="UniProtKB"/>
</dbReference>
<dbReference type="GO" id="GO:0000978">
    <property type="term" value="F:RNA polymerase II cis-regulatory region sequence-specific DNA binding"/>
    <property type="evidence" value="ECO:0000314"/>
    <property type="project" value="NTNU_SB"/>
</dbReference>
<dbReference type="GO" id="GO:0043565">
    <property type="term" value="F:sequence-specific DNA binding"/>
    <property type="evidence" value="ECO:0000250"/>
    <property type="project" value="UniProtKB"/>
</dbReference>
<dbReference type="GO" id="GO:0030183">
    <property type="term" value="P:B cell differentiation"/>
    <property type="evidence" value="ECO:0000270"/>
    <property type="project" value="UniProtKB"/>
</dbReference>
<dbReference type="GO" id="GO:0006338">
    <property type="term" value="P:chromatin remodeling"/>
    <property type="evidence" value="ECO:0000304"/>
    <property type="project" value="UniProtKB"/>
</dbReference>
<dbReference type="GO" id="GO:0006351">
    <property type="term" value="P:DNA-templated transcription"/>
    <property type="evidence" value="ECO:0007669"/>
    <property type="project" value="InterPro"/>
</dbReference>
<dbReference type="GO" id="GO:0043353">
    <property type="term" value="P:enucleate erythrocyte differentiation"/>
    <property type="evidence" value="ECO:0000315"/>
    <property type="project" value="UniProtKB"/>
</dbReference>
<dbReference type="GO" id="GO:0006955">
    <property type="term" value="P:immune response"/>
    <property type="evidence" value="ECO:0000314"/>
    <property type="project" value="UniProtKB"/>
</dbReference>
<dbReference type="GO" id="GO:0001889">
    <property type="term" value="P:liver development"/>
    <property type="evidence" value="ECO:0000250"/>
    <property type="project" value="UniProtKB"/>
</dbReference>
<dbReference type="GO" id="GO:0016071">
    <property type="term" value="P:mRNA metabolic process"/>
    <property type="evidence" value="ECO:0000315"/>
    <property type="project" value="MGI"/>
</dbReference>
<dbReference type="GO" id="GO:0042267">
    <property type="term" value="P:natural killer cell mediated cytotoxicity"/>
    <property type="evidence" value="ECO:0000315"/>
    <property type="project" value="UniProtKB"/>
</dbReference>
<dbReference type="GO" id="GO:0043433">
    <property type="term" value="P:negative regulation of DNA-binding transcription factor activity"/>
    <property type="evidence" value="ECO:0000314"/>
    <property type="project" value="UniProtKB"/>
</dbReference>
<dbReference type="GO" id="GO:0006337">
    <property type="term" value="P:nucleosome disassembly"/>
    <property type="evidence" value="ECO:0000304"/>
    <property type="project" value="UniProtKB"/>
</dbReference>
<dbReference type="GO" id="GO:0045739">
    <property type="term" value="P:positive regulation of DNA repair"/>
    <property type="evidence" value="ECO:0000250"/>
    <property type="project" value="UniProtKB"/>
</dbReference>
<dbReference type="GO" id="GO:0032729">
    <property type="term" value="P:positive regulation of type II interferon production"/>
    <property type="evidence" value="ECO:0000315"/>
    <property type="project" value="UniProtKB"/>
</dbReference>
<dbReference type="GO" id="GO:0006357">
    <property type="term" value="P:regulation of transcription by RNA polymerase II"/>
    <property type="evidence" value="ECO:0000266"/>
    <property type="project" value="MGI"/>
</dbReference>
<dbReference type="CDD" id="cd14713">
    <property type="entry name" value="bZIP_CEBPG"/>
    <property type="match status" value="1"/>
</dbReference>
<dbReference type="FunFam" id="1.20.5.170:FF:000055">
    <property type="entry name" value="CCAAT/enhancer-binding protein gamma"/>
    <property type="match status" value="1"/>
</dbReference>
<dbReference type="Gene3D" id="1.20.5.170">
    <property type="match status" value="1"/>
</dbReference>
<dbReference type="InterPro" id="IPR004827">
    <property type="entry name" value="bZIP"/>
</dbReference>
<dbReference type="InterPro" id="IPR046347">
    <property type="entry name" value="bZIP_sf"/>
</dbReference>
<dbReference type="InterPro" id="IPR031106">
    <property type="entry name" value="C/EBP"/>
</dbReference>
<dbReference type="PANTHER" id="PTHR23334">
    <property type="entry name" value="CCAAT/ENHANCER BINDING PROTEIN"/>
    <property type="match status" value="1"/>
</dbReference>
<dbReference type="PANTHER" id="PTHR23334:SF69">
    <property type="entry name" value="CCAAT_ENHANCER-BINDING PROTEIN GAMMA"/>
    <property type="match status" value="1"/>
</dbReference>
<dbReference type="Pfam" id="PF07716">
    <property type="entry name" value="bZIP_2"/>
    <property type="match status" value="1"/>
</dbReference>
<dbReference type="SMART" id="SM00338">
    <property type="entry name" value="BRLZ"/>
    <property type="match status" value="1"/>
</dbReference>
<dbReference type="SUPFAM" id="SSF57959">
    <property type="entry name" value="Leucine zipper domain"/>
    <property type="match status" value="1"/>
</dbReference>
<dbReference type="PROSITE" id="PS50217">
    <property type="entry name" value="BZIP"/>
    <property type="match status" value="1"/>
</dbReference>
<keyword id="KW-0010">Activator</keyword>
<keyword id="KW-0238">DNA-binding</keyword>
<keyword id="KW-1017">Isopeptide bond</keyword>
<keyword id="KW-0539">Nucleus</keyword>
<keyword id="KW-1185">Reference proteome</keyword>
<keyword id="KW-0804">Transcription</keyword>
<keyword id="KW-0805">Transcription regulation</keyword>
<keyword id="KW-0832">Ubl conjugation</keyword>
<organism>
    <name type="scientific">Mus musculus</name>
    <name type="common">Mouse</name>
    <dbReference type="NCBI Taxonomy" id="10090"/>
    <lineage>
        <taxon>Eukaryota</taxon>
        <taxon>Metazoa</taxon>
        <taxon>Chordata</taxon>
        <taxon>Craniata</taxon>
        <taxon>Vertebrata</taxon>
        <taxon>Euteleostomi</taxon>
        <taxon>Mammalia</taxon>
        <taxon>Eutheria</taxon>
        <taxon>Euarchontoglires</taxon>
        <taxon>Glires</taxon>
        <taxon>Rodentia</taxon>
        <taxon>Myomorpha</taxon>
        <taxon>Muroidea</taxon>
        <taxon>Muridae</taxon>
        <taxon>Murinae</taxon>
        <taxon>Mus</taxon>
        <taxon>Mus</taxon>
    </lineage>
</organism>
<gene>
    <name type="primary">Cebpg</name>
</gene>
<comment type="function">
    <text evidence="1 2 5 6 7">Transcription factor that binds to the promoter and the enhancer regions of target genes (PubMed:21602272). Binds to the promoter and the enhancer of the immunoglobulin heavy chain (PubMed:2121606). Binds to GPE1, a cis-acting element in the G-CSF gene promoter (PubMed:1709121). Binds to the enhancer element PRE-I (positive regulatory element-I) of the IL-4 gene (By similarity). Binds to the promoter and the enhancer of the alpha-1-fetoprotein gene (By similarity).</text>
</comment>
<comment type="subunit">
    <text evidence="1 7">Binds DNA as a dimer and can form stable heterodimers with CEBPA (PubMed:2121606). Can form stable heterodimers with CEBPB (By similarity). Interacts with ZNF638; this interaction increases transcriptional activation (PubMed:21602272).</text>
</comment>
<comment type="subcellular location">
    <subcellularLocation>
        <location evidence="5 11">Nucleus</location>
    </subcellularLocation>
</comment>
<comment type="tissue specificity">
    <text evidence="5 6">Ubiquitous.</text>
</comment>
<comment type="similarity">
    <text evidence="10">Belongs to the bZIP family. C/EBP subfamily.</text>
</comment>
<comment type="sequence caution" evidence="10">
    <conflict type="erroneous initiation">
        <sequence resource="EMBL-CDS" id="CAA39116"/>
    </conflict>
</comment>
<feature type="chain" id="PRO_0000076629" description="CCAAT/enhancer-binding protein gamma">
    <location>
        <begin position="1"/>
        <end position="150"/>
    </location>
</feature>
<feature type="domain" description="bZIP" evidence="3">
    <location>
        <begin position="62"/>
        <end position="125"/>
    </location>
</feature>
<feature type="region of interest" description="Disordered" evidence="4">
    <location>
        <begin position="27"/>
        <end position="94"/>
    </location>
</feature>
<feature type="region of interest" description="Basic motif" evidence="3">
    <location>
        <begin position="66"/>
        <end position="93"/>
    </location>
</feature>
<feature type="region of interest" description="Leucine-zipper" evidence="3">
    <location>
        <begin position="97"/>
        <end position="118"/>
    </location>
</feature>
<feature type="region of interest" description="Disordered" evidence="4">
    <location>
        <begin position="129"/>
        <end position="150"/>
    </location>
</feature>
<feature type="compositionally biased region" description="Low complexity" evidence="4">
    <location>
        <begin position="28"/>
        <end position="37"/>
    </location>
</feature>
<feature type="compositionally biased region" description="Basic and acidic residues" evidence="4">
    <location>
        <begin position="56"/>
        <end position="72"/>
    </location>
</feature>
<feature type="compositionally biased region" description="Polar residues" evidence="4">
    <location>
        <begin position="134"/>
        <end position="150"/>
    </location>
</feature>
<feature type="cross-link" description="Glycyl lysine isopeptide (Lys-Gly) (interchain with G-Cter in SUMO2)" evidence="2">
    <location>
        <position position="3"/>
    </location>
</feature>
<accession>P53568</accession>
<evidence type="ECO:0000250" key="1">
    <source>
        <dbReference type="UniProtKB" id="P26801"/>
    </source>
</evidence>
<evidence type="ECO:0000250" key="2">
    <source>
        <dbReference type="UniProtKB" id="P53567"/>
    </source>
</evidence>
<evidence type="ECO:0000255" key="3">
    <source>
        <dbReference type="PROSITE-ProRule" id="PRU00978"/>
    </source>
</evidence>
<evidence type="ECO:0000256" key="4">
    <source>
        <dbReference type="SAM" id="MobiDB-lite"/>
    </source>
</evidence>
<evidence type="ECO:0000269" key="5">
    <source>
    </source>
</evidence>
<evidence type="ECO:0000269" key="6">
    <source>
    </source>
</evidence>
<evidence type="ECO:0000269" key="7">
    <source>
    </source>
</evidence>
<evidence type="ECO:0000303" key="8">
    <source>
    </source>
</evidence>
<evidence type="ECO:0000303" key="9">
    <source>
    </source>
</evidence>
<evidence type="ECO:0000305" key="10"/>
<evidence type="ECO:0000305" key="11">
    <source>
    </source>
</evidence>
<protein>
    <recommendedName>
        <fullName>CCAAT/enhancer-binding protein gamma</fullName>
        <shortName>C/EBP gamma</shortName>
    </recommendedName>
    <alternativeName>
        <fullName>Granulocyte colony-stimulating factor promoter element 1-binding protein</fullName>
        <shortName evidence="8">GPE1-BP</shortName>
        <shortName>GPE1-binding protein</shortName>
    </alternativeName>
    <alternativeName>
        <fullName evidence="9">Immunoglobulin enhancer-binding protein 1</fullName>
        <shortName>IG/EBP-1</shortName>
    </alternativeName>
</protein>
<sequence>MSKLSQPATTPGVNGISVIHTQAHASGLQQVPQLVPAGPGGGGKAVPPSKQSKKSSPMDRNSDEYRQRRERNNMAVKKSRLKSKQKAQDTLQRVNQLKEENERLEAKIKLLTKELSVLKDLFLEHAHSLADNVQPISTETTATNSDNPGQ</sequence>
<reference key="1">
    <citation type="journal article" date="1990" name="Genes Dev.">
        <title>Ig/EBP-1: a ubiquitously expressed immunoglobulin enhancer binding protein that is similar to C/EBP and heterodimerizes with C/EBP.</title>
        <authorList>
            <person name="Roman C."/>
            <person name="Platero J.S."/>
            <person name="Shuman J."/>
            <person name="Calame K."/>
        </authorList>
    </citation>
    <scope>NUCLEOTIDE SEQUENCE [MRNA]</scope>
    <scope>FUNCTION</scope>
    <scope>SUBUNIT</scope>
    <scope>INTERACTION WITH CEBPA</scope>
    <scope>TISSUE SPECIFICITY</scope>
</reference>
<reference key="2">
    <citation type="journal article" date="1991" name="FEBS Lett.">
        <title>Molecular cloning of cDNA and a chromosomal gene encoding GPE1-BP, a nuclear protein which binds to granulocyte colony-stimulating factor promoter element 1.</title>
        <authorList>
            <person name="Nishizawa M."/>
            <person name="Wakabayashi-Ito N."/>
            <person name="Nagata S."/>
        </authorList>
    </citation>
    <scope>NUCLEOTIDE SEQUENCE [MRNA]</scope>
    <scope>FUNCTION</scope>
    <scope>SUBCELLULAR LOCATION</scope>
    <scope>TISSUE SPECIFICITY</scope>
    <source>
        <tissue>Macrophage</tissue>
    </source>
</reference>
<reference key="3">
    <citation type="journal article" date="2004" name="Genome Res.">
        <title>The status, quality, and expansion of the NIH full-length cDNA project: the Mammalian Gene Collection (MGC).</title>
        <authorList>
            <consortium name="The MGC Project Team"/>
        </authorList>
    </citation>
    <scope>NUCLEOTIDE SEQUENCE [LARGE SCALE MRNA]</scope>
    <source>
        <strain>FVB/N</strain>
        <tissue>Mammary gland</tissue>
    </source>
</reference>
<reference key="4">
    <citation type="journal article" date="2010" name="Cell">
        <title>A tissue-specific atlas of mouse protein phosphorylation and expression.</title>
        <authorList>
            <person name="Huttlin E.L."/>
            <person name="Jedrychowski M.P."/>
            <person name="Elias J.E."/>
            <person name="Goswami T."/>
            <person name="Rad R."/>
            <person name="Beausoleil S.A."/>
            <person name="Villen J."/>
            <person name="Haas W."/>
            <person name="Sowa M.E."/>
            <person name="Gygi S.P."/>
        </authorList>
    </citation>
    <scope>IDENTIFICATION BY MASS SPECTROMETRY [LARGE SCALE ANALYSIS]</scope>
    <source>
        <tissue>Testis</tissue>
    </source>
</reference>
<reference key="5">
    <citation type="journal article" date="2011" name="J. Biol. Chem.">
        <title>Regulation of adipocyte differentiation by the zinc finger protein ZNF638.</title>
        <authorList>
            <person name="Meruvu S."/>
            <person name="Hugendubler L."/>
            <person name="Mueller E."/>
        </authorList>
    </citation>
    <scope>FUNCTION</scope>
    <scope>INTERACTION WITH ZNF638</scope>
</reference>
<proteinExistence type="evidence at protein level"/>
<name>CEBPG_MOUSE</name>